<dbReference type="EC" id="6.3.2.2" evidence="1"/>
<dbReference type="EMBL" id="CR628337">
    <property type="protein sequence ID" value="CAH14886.1"/>
    <property type="molecule type" value="Genomic_DNA"/>
</dbReference>
<dbReference type="RefSeq" id="WP_011214835.1">
    <property type="nucleotide sequence ID" value="NC_006369.1"/>
</dbReference>
<dbReference type="SMR" id="Q5WYT4"/>
<dbReference type="KEGG" id="lpf:lpl0652"/>
<dbReference type="LegioList" id="lpl0652"/>
<dbReference type="HOGENOM" id="CLU_044848_1_1_6"/>
<dbReference type="Proteomes" id="UP000002517">
    <property type="component" value="Chromosome"/>
</dbReference>
<dbReference type="GO" id="GO:0005524">
    <property type="term" value="F:ATP binding"/>
    <property type="evidence" value="ECO:0007669"/>
    <property type="project" value="UniProtKB-KW"/>
</dbReference>
<dbReference type="GO" id="GO:0004357">
    <property type="term" value="F:glutamate-cysteine ligase activity"/>
    <property type="evidence" value="ECO:0007669"/>
    <property type="project" value="UniProtKB-EC"/>
</dbReference>
<dbReference type="GO" id="GO:0042398">
    <property type="term" value="P:modified amino acid biosynthetic process"/>
    <property type="evidence" value="ECO:0007669"/>
    <property type="project" value="InterPro"/>
</dbReference>
<dbReference type="Gene3D" id="3.30.590.20">
    <property type="match status" value="1"/>
</dbReference>
<dbReference type="HAMAP" id="MF_01609">
    <property type="entry name" value="Glu_cys_ligase_2"/>
    <property type="match status" value="1"/>
</dbReference>
<dbReference type="InterPro" id="IPR050141">
    <property type="entry name" value="GCL_type2/YbdK_subfam"/>
</dbReference>
<dbReference type="InterPro" id="IPR006336">
    <property type="entry name" value="GCS2"/>
</dbReference>
<dbReference type="InterPro" id="IPR014746">
    <property type="entry name" value="Gln_synth/guanido_kin_cat_dom"/>
</dbReference>
<dbReference type="InterPro" id="IPR011793">
    <property type="entry name" value="YbdK"/>
</dbReference>
<dbReference type="NCBIfam" id="TIGR02050">
    <property type="entry name" value="gshA_cyan_rel"/>
    <property type="match status" value="1"/>
</dbReference>
<dbReference type="NCBIfam" id="NF010040">
    <property type="entry name" value="PRK13516.1"/>
    <property type="match status" value="1"/>
</dbReference>
<dbReference type="PANTHER" id="PTHR36510">
    <property type="entry name" value="GLUTAMATE--CYSTEINE LIGASE 2-RELATED"/>
    <property type="match status" value="1"/>
</dbReference>
<dbReference type="PANTHER" id="PTHR36510:SF1">
    <property type="entry name" value="GLUTAMATE--CYSTEINE LIGASE 2-RELATED"/>
    <property type="match status" value="1"/>
</dbReference>
<dbReference type="Pfam" id="PF04107">
    <property type="entry name" value="GCS2"/>
    <property type="match status" value="1"/>
</dbReference>
<dbReference type="SUPFAM" id="SSF55931">
    <property type="entry name" value="Glutamine synthetase/guanido kinase"/>
    <property type="match status" value="1"/>
</dbReference>
<protein>
    <recommendedName>
        <fullName evidence="1">Putative glutamate--cysteine ligase 2-1</fullName>
        <ecNumber evidence="1">6.3.2.2</ecNumber>
    </recommendedName>
    <alternativeName>
        <fullName evidence="1">Gamma-glutamylcysteine synthetase 2-1</fullName>
        <shortName evidence="1">GCS 2-1</shortName>
        <shortName evidence="1">Gamma-GCS 2-1</shortName>
    </alternativeName>
</protein>
<reference key="1">
    <citation type="journal article" date="2004" name="Nat. Genet.">
        <title>Evidence in the Legionella pneumophila genome for exploitation of host cell functions and high genome plasticity.</title>
        <authorList>
            <person name="Cazalet C."/>
            <person name="Rusniok C."/>
            <person name="Brueggemann H."/>
            <person name="Zidane N."/>
            <person name="Magnier A."/>
            <person name="Ma L."/>
            <person name="Tichit M."/>
            <person name="Jarraud S."/>
            <person name="Bouchier C."/>
            <person name="Vandenesch F."/>
            <person name="Kunst F."/>
            <person name="Etienne J."/>
            <person name="Glaser P."/>
            <person name="Buchrieser C."/>
        </authorList>
    </citation>
    <scope>NUCLEOTIDE SEQUENCE [LARGE SCALE GENOMIC DNA]</scope>
    <source>
        <strain>Lens</strain>
    </source>
</reference>
<name>GCS21_LEGPL</name>
<organism>
    <name type="scientific">Legionella pneumophila (strain Lens)</name>
    <dbReference type="NCBI Taxonomy" id="297245"/>
    <lineage>
        <taxon>Bacteria</taxon>
        <taxon>Pseudomonadati</taxon>
        <taxon>Pseudomonadota</taxon>
        <taxon>Gammaproteobacteria</taxon>
        <taxon>Legionellales</taxon>
        <taxon>Legionellaceae</taxon>
        <taxon>Legionella</taxon>
    </lineage>
</organism>
<proteinExistence type="inferred from homology"/>
<gene>
    <name type="ordered locus">lpl0652</name>
</gene>
<comment type="function">
    <text evidence="1">ATP-dependent carboxylate-amine ligase which exhibits weak glutamate--cysteine ligase activity.</text>
</comment>
<comment type="catalytic activity">
    <reaction evidence="1">
        <text>L-cysteine + L-glutamate + ATP = gamma-L-glutamyl-L-cysteine + ADP + phosphate + H(+)</text>
        <dbReference type="Rhea" id="RHEA:13285"/>
        <dbReference type="ChEBI" id="CHEBI:15378"/>
        <dbReference type="ChEBI" id="CHEBI:29985"/>
        <dbReference type="ChEBI" id="CHEBI:30616"/>
        <dbReference type="ChEBI" id="CHEBI:35235"/>
        <dbReference type="ChEBI" id="CHEBI:43474"/>
        <dbReference type="ChEBI" id="CHEBI:58173"/>
        <dbReference type="ChEBI" id="CHEBI:456216"/>
        <dbReference type="EC" id="6.3.2.2"/>
    </reaction>
</comment>
<comment type="similarity">
    <text evidence="1">Belongs to the glutamate--cysteine ligase type 2 family. YbdK subfamily.</text>
</comment>
<keyword id="KW-0067">ATP-binding</keyword>
<keyword id="KW-0436">Ligase</keyword>
<keyword id="KW-0547">Nucleotide-binding</keyword>
<evidence type="ECO:0000255" key="1">
    <source>
        <dbReference type="HAMAP-Rule" id="MF_01609"/>
    </source>
</evidence>
<sequence>MPLQPFKTSNLLTMGVELELQLISLSNFDLTAASPDILELLGRSSFPGSFTPEITESMLEIATDVHEEYEQLLKQLFHIRDTLVAVGDRLNIGICGGGTHPFQMWSDQRIFNKTRFIEVSELYGYLTKQFTIFGQHIHIGCEDGNQALFLLHSLNRYIPHFIALSASSPFVQSKDTLYNSARLNSVFAFPLSGRAPFVLNWDEFSLGYFEKMEHTGIVKSMKDFYWDLRPKPEFGTIEMRVCDSPLTVERAAALACYMQALCSYLLENKEPLPHEDDYLVYNYNRFQACRFGLDGTLVHPKTYEQILLREDILTTLRRLKPYANQLNSTMALEHIYEITHKGSDASFLREKYAEHRTLESVVNESLKQFRSSK</sequence>
<accession>Q5WYT4</accession>
<feature type="chain" id="PRO_0000218203" description="Putative glutamate--cysteine ligase 2-1">
    <location>
        <begin position="1"/>
        <end position="373"/>
    </location>
</feature>